<keyword id="KW-0002">3D-structure</keyword>
<keyword id="KW-0460">Magnesium</keyword>
<keyword id="KW-0479">Metal-binding</keyword>
<keyword id="KW-0547">Nucleotide-binding</keyword>
<keyword id="KW-0548">Nucleotidyltransferase</keyword>
<keyword id="KW-0694">RNA-binding</keyword>
<keyword id="KW-0696">RNA-directed RNA polymerase</keyword>
<keyword id="KW-0808">Transferase</keyword>
<keyword id="KW-0693">Viral RNA replication</keyword>
<sequence>MSKTASSRNSLSAQLRRAANTRIEVEGNLALSIANDLLLAYGQSPFNSEAECISFSPRFDGTPDDFRINYLKAEIMSKYDDFSLGIDTEAVAWEKFLAAEAECALTNARLYRPDYSEDFNFSLGESCIHMARRKIAKLIGDVPSVEGMLRHCRFSGGATTTNNRSYGHPSFKFALPQACTPRALKYVLALRASTHFDIRISDISPFNKAVTVPKNSKTDRCIAIEPGWNMFFQLGIGGILRDRLRCWGIDLNDQTINQRRAHEGSVTNNLATVDLSAASDSISLALCELLLPPGWFEVLMDLRSPKGRLPDGSVVTYEKISSMGNGYTFELESLIFASLARSVCEILDLDSSEVTVYGDDIILPSCAVPALREVFKYVGFTTNTKKTFSEGPFRESCGKHYYSGVDVTPFYIRHRIVSPADLILVLNNLYRWATIDGVWDPRAHSVYLKYRKLLPKQLQRNTIPDGYGDGALVGSVLINPFAKNRGWIRYVPVITDHTRDRERAELGSYLYDLFSRCLSESNDGLPLRGPSGCDSADLFAIDQLICRSNPTKISRSTGKFDIQYIACSSRVLAPYGVFQGTKVASLHEA</sequence>
<feature type="chain" id="PRO_0000164855" description="RNA-directed RNA polymerase subunit beta">
    <location>
        <begin position="1"/>
        <end position="589"/>
    </location>
</feature>
<feature type="domain" description="RdRp catalytic" evidence="1">
    <location>
        <begin position="259"/>
        <end position="391"/>
    </location>
</feature>
<feature type="binding site" evidence="6 8 9">
    <location>
        <position position="274"/>
    </location>
    <ligand>
        <name>Mg(2+)</name>
        <dbReference type="ChEBI" id="CHEBI:18420"/>
        <label>1</label>
    </ligand>
</feature>
<feature type="binding site" evidence="6 8 9">
    <location>
        <position position="274"/>
    </location>
    <ligand>
        <name>Mg(2+)</name>
        <dbReference type="ChEBI" id="CHEBI:18420"/>
        <label>2</label>
    </ligand>
</feature>
<feature type="binding site" evidence="6 8 9">
    <location>
        <position position="359"/>
    </location>
    <ligand>
        <name>Mg(2+)</name>
        <dbReference type="ChEBI" id="CHEBI:18420"/>
        <label>1</label>
    </ligand>
</feature>
<feature type="binding site" evidence="6 8 9">
    <location>
        <position position="359"/>
    </location>
    <ligand>
        <name>Mg(2+)</name>
        <dbReference type="ChEBI" id="CHEBI:18420"/>
        <label>2</label>
    </ligand>
</feature>
<feature type="binding site" evidence="6 8 9">
    <location>
        <position position="360"/>
    </location>
    <ligand>
        <name>Mg(2+)</name>
        <dbReference type="ChEBI" id="CHEBI:18420"/>
        <label>1</label>
    </ligand>
</feature>
<feature type="binding site" evidence="6 8 9">
    <location>
        <position position="360"/>
    </location>
    <ligand>
        <name>Mg(2+)</name>
        <dbReference type="ChEBI" id="CHEBI:18420"/>
        <label>2</label>
    </ligand>
</feature>
<feature type="sequence variant" description="In strain: QB_1." evidence="4">
    <original>L</original>
    <variation>F</variation>
    <location>
        <position position="71"/>
    </location>
</feature>
<feature type="sequence variant" description="In strain: QB_ancestral, QB_1, QB_2, Qbeta_1_FR and Qbeta_2_FR." evidence="4 7">
    <original>M</original>
    <variation>I</variation>
    <location>
        <position position="130"/>
    </location>
</feature>
<feature type="sequence variant" evidence="11 16">
    <original>I</original>
    <variation>T</variation>
    <location>
        <position position="198"/>
    </location>
</feature>
<feature type="sequence variant" description="In strain: QB_1 and Qbeta_2_FR." evidence="4 7">
    <original>L</original>
    <variation>R</variation>
    <location>
        <position position="251"/>
    </location>
</feature>
<feature type="sequence variant" description="In strain: QB_1 and Qbeta_2_FR." evidence="4">
    <original>S</original>
    <variation>G</variation>
    <location>
        <position position="418"/>
    </location>
</feature>
<feature type="sequence variant" description="In strain: QB_2 and Qbeta_2_FR." evidence="4 7">
    <original>D</original>
    <variation>G</variation>
    <location>
        <position position="500"/>
    </location>
</feature>
<feature type="mutagenesis site" description="Loss of RNA polymerase activity." evidence="6">
    <original>K</original>
    <variation>A</variation>
    <location>
        <position position="78"/>
    </location>
</feature>
<feature type="mutagenesis site" description="Complete loss of infectivity; when associated with M-133." evidence="12">
    <original>R</original>
    <variation>M</variation>
    <location>
        <position position="132"/>
    </location>
</feature>
<feature type="mutagenesis site" description="Complete loss of infectivity; when associated with M-132." evidence="12">
    <original>R</original>
    <variation>M</variation>
    <location>
        <position position="133"/>
    </location>
</feature>
<feature type="mutagenesis site" description="Complete loss of infectivity." evidence="12">
    <original>K</original>
    <variation>A</variation>
    <location>
        <position position="134"/>
    </location>
</feature>
<feature type="mutagenesis site" description="Complete loss of infectivity." evidence="12">
    <original>K</original>
    <variation>M</variation>
    <location>
        <position position="137"/>
    </location>
</feature>
<feature type="mutagenesis site" description="Loss of RNA polymerase activity." evidence="6">
    <original>R</original>
    <variation>A</variation>
    <location>
        <position position="153"/>
    </location>
</feature>
<feature type="mutagenesis site" description="80% loss of RNA polymerase activity." evidence="6">
    <original>R</original>
    <variation>A</variation>
    <location>
        <position position="164"/>
    </location>
</feature>
<feature type="mutagenesis site" description="80% loss of RNA polymerase activity." evidence="8">
    <original>H</original>
    <variation>A</variation>
    <location>
        <position position="168"/>
    </location>
</feature>
<feature type="mutagenesis site" description="Loss of RNA polymerase activity." evidence="6">
    <original>K</original>
    <variation>A</variation>
    <location>
        <position position="214"/>
    </location>
</feature>
<feature type="mutagenesis site" description="Loss of RNA polymerase activity." evidence="6">
    <original>R</original>
    <variation>A</variation>
    <location>
        <position position="220"/>
    </location>
</feature>
<feature type="mutagenesis site" description="Decreased initiation of RNA polymerase activity." evidence="8">
    <original>R</original>
    <variation>A</variation>
    <location>
        <position position="241"/>
    </location>
</feature>
<feature type="mutagenesis site" description="Loss of RNA polymerase activity." evidence="6">
    <original>D</original>
    <variation>A</variation>
    <location>
        <position position="274"/>
    </location>
</feature>
<feature type="mutagenesis site" description="Loss of RNA polymerase activity." evidence="6">
    <original>S</original>
    <variation>A</variation>
    <location>
        <position position="279"/>
    </location>
</feature>
<feature type="mutagenesis site" description="Decreased initiation of RNA polymerase activity." evidence="8">
    <original>F</original>
    <variation>A</variation>
    <location>
        <position position="329"/>
    </location>
</feature>
<feature type="mutagenesis site" description="Almost complete loss of infectivity." evidence="12">
    <original>E</original>
    <variation>A</variation>
    <location>
        <position position="345"/>
    </location>
</feature>
<feature type="mutagenesis site" description="80% loss of infectivity." evidence="12">
    <original>D</original>
    <variation>A</variation>
    <location>
        <position position="348"/>
    </location>
</feature>
<feature type="mutagenesis site" description="95% loss of infectivity." evidence="12">
    <original>D</original>
    <variation>A</variation>
    <location>
        <position position="350"/>
    </location>
</feature>
<feature type="mutagenesis site" description="Decreased initiation of RNA polymerase activity." evidence="6 8">
    <original>Y</original>
    <variation>A</variation>
    <location>
        <position position="357"/>
    </location>
</feature>
<feature type="mutagenesis site" description="Loss of RNA polymerase activity." evidence="6">
    <original>D</original>
    <variation>A</variation>
    <location>
        <position position="359"/>
    </location>
</feature>
<feature type="mutagenesis site" description="Loss of RNA polymerase activity." evidence="6">
    <original>D</original>
    <variation>A</variation>
    <location>
        <position position="360"/>
    </location>
</feature>
<feature type="mutagenesis site" description="Loss of RNA polymerase activity." evidence="6">
    <original>E</original>
    <variation>A</variation>
    <location>
        <position position="395"/>
    </location>
</feature>
<feature type="mutagenesis site" description="60% loss of RNA polymerase activity." evidence="6">
    <original>Y</original>
    <variation>A</variation>
    <location>
        <position position="411"/>
    </location>
</feature>
<feature type="mutagenesis site" description="Loss of RNA polymerase activity." evidence="6">
    <original>R</original>
    <variation>A</variation>
    <location>
        <position position="413"/>
    </location>
</feature>
<feature type="mutagenesis site" description="50% loss of RNA polymerase activity." evidence="8">
    <original>Y</original>
    <variation>A</variation>
    <location>
        <position position="511"/>
    </location>
</feature>
<feature type="mutagenesis site" description="25% loss of RNA polymerase activity." evidence="8">
    <original>N</original>
    <variation>A</variation>
    <location>
        <position position="549"/>
    </location>
</feature>
<feature type="mutagenesis site" description="50% loss of RNA polymerase activity." evidence="8">
    <original>N</original>
    <variation>G</variation>
    <location>
        <position position="549"/>
    </location>
</feature>
<feature type="strand" evidence="32">
    <location>
        <begin position="5"/>
        <end position="7"/>
    </location>
</feature>
<feature type="helix" evidence="27">
    <location>
        <begin position="9"/>
        <end position="19"/>
    </location>
</feature>
<feature type="helix" evidence="27">
    <location>
        <begin position="29"/>
        <end position="40"/>
    </location>
</feature>
<feature type="strand" evidence="29">
    <location>
        <begin position="48"/>
        <end position="50"/>
    </location>
</feature>
<feature type="helix" evidence="27">
    <location>
        <begin position="51"/>
        <end position="53"/>
    </location>
</feature>
<feature type="helix" evidence="27">
    <location>
        <begin position="63"/>
        <end position="75"/>
    </location>
</feature>
<feature type="turn" evidence="27">
    <location>
        <begin position="76"/>
        <end position="78"/>
    </location>
</feature>
<feature type="strand" evidence="25">
    <location>
        <begin position="84"/>
        <end position="86"/>
    </location>
</feature>
<feature type="helix" evidence="27">
    <location>
        <begin position="90"/>
        <end position="110"/>
    </location>
</feature>
<feature type="strand" evidence="27">
    <location>
        <begin position="116"/>
        <end position="118"/>
    </location>
</feature>
<feature type="helix" evidence="27">
    <location>
        <begin position="123"/>
        <end position="139"/>
    </location>
</feature>
<feature type="helix" evidence="27">
    <location>
        <begin position="145"/>
        <end position="151"/>
    </location>
</feature>
<feature type="strand" evidence="31">
    <location>
        <begin position="160"/>
        <end position="162"/>
    </location>
</feature>
<feature type="helix" evidence="27">
    <location>
        <begin position="164"/>
        <end position="166"/>
    </location>
</feature>
<feature type="helix" evidence="27">
    <location>
        <begin position="169"/>
        <end position="174"/>
    </location>
</feature>
<feature type="strand" evidence="27">
    <location>
        <begin position="177"/>
        <end position="179"/>
    </location>
</feature>
<feature type="turn" evidence="27">
    <location>
        <begin position="181"/>
        <end position="183"/>
    </location>
</feature>
<feature type="helix" evidence="27">
    <location>
        <begin position="184"/>
        <end position="191"/>
    </location>
</feature>
<feature type="strand" evidence="27">
    <location>
        <begin position="200"/>
        <end position="203"/>
    </location>
</feature>
<feature type="strand" evidence="27">
    <location>
        <begin position="205"/>
        <end position="212"/>
    </location>
</feature>
<feature type="strand" evidence="25">
    <location>
        <begin position="215"/>
        <end position="217"/>
    </location>
</feature>
<feature type="strand" evidence="27">
    <location>
        <begin position="220"/>
        <end position="224"/>
    </location>
</feature>
<feature type="helix" evidence="27">
    <location>
        <begin position="227"/>
        <end position="244"/>
    </location>
</feature>
<feature type="helix" evidence="27">
    <location>
        <begin position="245"/>
        <end position="247"/>
    </location>
</feature>
<feature type="helix" evidence="27">
    <location>
        <begin position="255"/>
        <end position="267"/>
    </location>
</feature>
<feature type="strand" evidence="27">
    <location>
        <begin position="270"/>
        <end position="273"/>
    </location>
</feature>
<feature type="strand" evidence="30">
    <location>
        <begin position="275"/>
        <end position="277"/>
    </location>
</feature>
<feature type="helix" evidence="27">
    <location>
        <begin position="278"/>
        <end position="281"/>
    </location>
</feature>
<feature type="helix" evidence="27">
    <location>
        <begin position="284"/>
        <end position="288"/>
    </location>
</feature>
<feature type="helix" evidence="27">
    <location>
        <begin position="293"/>
        <end position="302"/>
    </location>
</feature>
<feature type="strand" evidence="27">
    <location>
        <begin position="306"/>
        <end position="308"/>
    </location>
</feature>
<feature type="strand" evidence="24">
    <location>
        <begin position="310"/>
        <end position="312"/>
    </location>
</feature>
<feature type="strand" evidence="27">
    <location>
        <begin position="314"/>
        <end position="316"/>
    </location>
</feature>
<feature type="strand" evidence="27">
    <location>
        <begin position="318"/>
        <end position="320"/>
    </location>
</feature>
<feature type="strand" evidence="26">
    <location>
        <begin position="325"/>
        <end position="327"/>
    </location>
</feature>
<feature type="helix" evidence="27">
    <location>
        <begin position="328"/>
        <end position="346"/>
    </location>
</feature>
<feature type="helix" evidence="27">
    <location>
        <begin position="351"/>
        <end position="353"/>
    </location>
</feature>
<feature type="strand" evidence="27">
    <location>
        <begin position="355"/>
        <end position="357"/>
    </location>
</feature>
<feature type="strand" evidence="27">
    <location>
        <begin position="360"/>
        <end position="364"/>
    </location>
</feature>
<feature type="helix" evidence="27">
    <location>
        <begin position="365"/>
        <end position="367"/>
    </location>
</feature>
<feature type="helix" evidence="27">
    <location>
        <begin position="368"/>
        <end position="377"/>
    </location>
</feature>
<feature type="helix" evidence="27">
    <location>
        <begin position="384"/>
        <end position="386"/>
    </location>
</feature>
<feature type="strand" evidence="27">
    <location>
        <begin position="388"/>
        <end position="396"/>
    </location>
</feature>
<feature type="strand" evidence="27">
    <location>
        <begin position="399"/>
        <end position="402"/>
    </location>
</feature>
<feature type="helix" evidence="27">
    <location>
        <begin position="419"/>
        <end position="433"/>
    </location>
</feature>
<feature type="strand" evidence="23">
    <location>
        <begin position="434"/>
        <end position="437"/>
    </location>
</feature>
<feature type="helix" evidence="27">
    <location>
        <begin position="441"/>
        <end position="451"/>
    </location>
</feature>
<feature type="helix" evidence="27">
    <location>
        <begin position="456"/>
        <end position="460"/>
    </location>
</feature>
<feature type="strand" evidence="25">
    <location>
        <begin position="465"/>
        <end position="467"/>
    </location>
</feature>
<feature type="strand" evidence="27">
    <location>
        <begin position="469"/>
        <end position="474"/>
    </location>
</feature>
<feature type="turn" evidence="27">
    <location>
        <begin position="476"/>
        <end position="478"/>
    </location>
</feature>
<feature type="strand" evidence="27">
    <location>
        <begin position="483"/>
        <end position="485"/>
    </location>
</feature>
<feature type="strand" evidence="27">
    <location>
        <begin position="488"/>
        <end position="500"/>
    </location>
</feature>
<feature type="helix" evidence="27">
    <location>
        <begin position="505"/>
        <end position="520"/>
    </location>
</feature>
<feature type="helix" evidence="28">
    <location>
        <begin position="536"/>
        <end position="542"/>
    </location>
</feature>
<feature type="helix" evidence="27">
    <location>
        <begin position="543"/>
        <end position="545"/>
    </location>
</feature>
<feature type="strand" evidence="27">
    <location>
        <begin position="554"/>
        <end position="566"/>
    </location>
</feature>
<organismHost>
    <name type="scientific">Escherichia coli</name>
    <dbReference type="NCBI Taxonomy" id="562"/>
</organismHost>
<accession>P14647</accession>
<accession>D0U1F4</accession>
<accession>D0U1F8</accession>
<accession>D0U1G6</accession>
<accession>G4WZR0</accession>
<accession>G4WZR4</accession>
<accession>Q8LTE0</accession>
<proteinExistence type="evidence at protein level"/>
<comment type="function">
    <text evidence="5 6 8 9 10 12 13 14 15">This is the catalytic subunit of the viral RNA-dependent RNA polymerase complex. This complex is involved in viral RNA replication that produces (+)-stranded genomes via a complementary, (-)-stranded intermediate. Binds RNA cooperatively with the host ribosomal protein S1.</text>
</comment>
<comment type="catalytic activity">
    <reaction evidence="1 8">
        <text>RNA(n) + a ribonucleoside 5'-triphosphate = RNA(n+1) + diphosphate</text>
        <dbReference type="Rhea" id="RHEA:21248"/>
        <dbReference type="Rhea" id="RHEA-COMP:14527"/>
        <dbReference type="Rhea" id="RHEA-COMP:17342"/>
        <dbReference type="ChEBI" id="CHEBI:33019"/>
        <dbReference type="ChEBI" id="CHEBI:61557"/>
        <dbReference type="ChEBI" id="CHEBI:140395"/>
        <dbReference type="EC" id="2.7.7.48"/>
    </reaction>
</comment>
<comment type="cofactor">
    <cofactor evidence="6 8 9">
        <name>Mg(2+)</name>
        <dbReference type="ChEBI" id="CHEBI:18420"/>
    </cofactor>
    <text evidence="6 8 9">Binds 2 Mg(2+) per subunit, Ca(2+) is used in crystallization to prevent RNA polymerase activity.</text>
</comment>
<comment type="subunit">
    <text evidence="2 5 6 8 9 10 13 14 15">Homodimer; the replicase complex can dimerize. Part of the viral RNA-dependent RNA polymerase complex, the other subunits are the host ribosomal protein S1, EF-Tu and EF-Ts. S1 is needed for the initiation of genomic RNA (+)-strand replication.</text>
</comment>
<comment type="interaction">
    <interactant intactId="EBI-9010000">
        <id>P14647</id>
    </interactant>
    <interactant intactId="EBI-301164">
        <id>P0A6P1</id>
        <label>tsf</label>
    </interactant>
    <organismsDiffer>true</organismsDiffer>
    <experiments>2</experiments>
</comment>
<comment type="interaction">
    <interactant intactId="EBI-9010000">
        <id>P14647</id>
    </interactant>
    <interactant intactId="EBI-301077">
        <id>P0CE47</id>
        <label>tufA</label>
    </interactant>
    <organismsDiffer>true</organismsDiffer>
    <experiments>2</experiments>
</comment>
<comment type="miscellaneous">
    <text evidence="3 6 8 9 10">In order to produce high amounts of RNA polymerase catalytic core, a fusion protein consisting of tsf-tufB-replicase with a cleavable linker between tufB and the viral replicase subunit is frequently used.</text>
</comment>
<organism>
    <name type="scientific">Escherichia virus Qbeta</name>
    <name type="common">Bacteriophage Q-beta</name>
    <dbReference type="NCBI Taxonomy" id="39803"/>
    <lineage>
        <taxon>Viruses</taxon>
        <taxon>Riboviria</taxon>
        <taxon>Orthornavirae</taxon>
        <taxon>Lenarviricota</taxon>
        <taxon>Leviviricetes</taxon>
        <taxon>Norzivirales</taxon>
        <taxon>Fiersviridae</taxon>
        <taxon>Qubevirus</taxon>
    </lineage>
</organism>
<reference key="1">
    <citation type="journal article" date="1989" name="J. Mol. Biol.">
        <title>Q-beta replicase: mapping the functional domains of an RNA-dependent RNA polymerase.</title>
        <authorList>
            <person name="Mills D.R."/>
            <person name="Priano C."/>
            <person name="Dimauro P."/>
            <person name="Binderow B.D."/>
        </authorList>
    </citation>
    <scope>NUCLEOTIDE SEQUENCE [GENOMIC RNA]</scope>
</reference>
<reference key="2">
    <citation type="thesis" date="1981" institute="University of Zurich" country="Switzerland">
        <authorList>
            <person name="Mekler P."/>
        </authorList>
    </citation>
    <scope>NUCLEOTIDE SEQUENCE [GENOMIC RNA]</scope>
</reference>
<reference key="3">
    <citation type="journal article" date="2003" name="BMC Evol. Biol.">
        <title>Evolution of phage with chemically ambiguous proteomes.</title>
        <authorList>
            <person name="Bacher J.M."/>
            <person name="Bull J.J."/>
            <person name="Ellington A.D."/>
        </authorList>
    </citation>
    <scope>NUCLEOTIDE SEQUENCE [GENOMIC RNA]</scope>
</reference>
<reference key="4">
    <citation type="journal article" date="2009" name="PLoS Genet.">
        <title>The fitness effects of random mutations in single-stranded DNA and RNA bacteriophages.</title>
        <authorList>
            <person name="Domingo-Calap P."/>
            <person name="Cuevas J.M."/>
            <person name="Sanjuan R."/>
        </authorList>
    </citation>
    <scope>NUCLEOTIDE SEQUENCE [GENOMIC RNA]</scope>
    <source>
        <strain evidence="18">QB_1</strain>
        <strain evidence="19">QB_2</strain>
        <strain evidence="20">QB_ancestral</strain>
    </source>
</reference>
<reference key="5">
    <citation type="journal article" date="2011" name="Evolution">
        <title>Experimental evolution of RNA versus DNA viruses.</title>
        <authorList>
            <person name="Domingo-Calap P."/>
            <person name="Sanjuan R."/>
        </authorList>
    </citation>
    <scope>NUCLEOTIDE SEQUENCE [GENOMIC RNA]</scope>
    <source>
        <strain>Qbeta_1_FR</strain>
        <strain evidence="21">Qbeta_2_FR</strain>
    </source>
</reference>
<reference key="6">
    <citation type="journal article" date="2014" name="J. Virol.">
        <title>Contribution of silent mutations to thermal adaptation of RNA bacteriophage Qbeta.</title>
        <authorList>
            <person name="Kashiwagi A."/>
            <person name="Sugawara R."/>
            <person name="Sano-Tsushima F."/>
            <person name="Kumagai T."/>
            <person name="Yomo T."/>
        </authorList>
    </citation>
    <scope>NUCLEOTIDE SEQUENCE [GENOMIC RNA]</scope>
    <source>
        <strain>Anc</strain>
    </source>
</reference>
<reference key="7">
    <citation type="journal article" date="1976" name="Biochim. Biophys. Acta">
        <title>The binding site for coat protein on bacteriophage Q-beta RNA.</title>
        <authorList>
            <person name="Weber H."/>
        </authorList>
    </citation>
    <scope>NUCLEOTIDE SEQUENCE [GENOMIC RNA] OF 1-23</scope>
</reference>
<reference key="8">
    <citation type="journal article" date="1975" name="Arch. Int. Physiol. Biochim.">
        <title>Structure and function of RNA replicase of bacteriophage Qbeta.</title>
        <authorList>
            <person name="Kondo M."/>
        </authorList>
    </citation>
    <scope>FUNCTION</scope>
    <scope>SUBUNIT</scope>
</reference>
<reference key="9">
    <citation type="journal article" date="1976" name="J. Biol. Chem.">
        <title>Immunochemical analysis of the functions of the subunits of phage Qbeta ribonucleic acid replicase.</title>
        <authorList>
            <person name="Carmichael G.G."/>
            <person name="Landers T.A."/>
            <person name="Weber K."/>
        </authorList>
    </citation>
    <scope>FUNCTION</scope>
    <scope>SUBUNIT</scope>
</reference>
<reference key="10">
    <citation type="journal article" date="1983" name="J. Biol. Chem.">
        <title>The activity of discrete fragments of ribosomal protein S1 in Q beta replicase function.</title>
        <authorList>
            <person name="Guerrier-Takada C."/>
            <person name="Subramanian A.R."/>
            <person name="Cole P.E."/>
        </authorList>
    </citation>
    <scope>FUNCTION</scope>
    <scope>SUBUNIT</scope>
</reference>
<reference key="11">
    <citation type="journal article" date="2006" name="J. Biosci. Bioeng.">
        <title>Functional Qbeta replicase genetically fusing essential subunits EF-Ts and EF-Tu with beta-subunit.</title>
        <authorList>
            <person name="Kita H."/>
            <person name="Cho J."/>
            <person name="Matsuura T."/>
            <person name="Nakaishi T."/>
            <person name="Taniguchi I."/>
            <person name="Ichikawa T."/>
            <person name="Shima Y."/>
            <person name="Urabe I."/>
            <person name="Yomo T."/>
        </authorList>
    </citation>
    <scope>CONSTRUCT TO PRODUCE VIRAL CATALYTIC CORE</scope>
</reference>
<reference key="12">
    <citation type="journal article" date="2010" name="Proc. Natl. Acad. Sci. U.S.A.">
        <title>Structure of the Qbeta replicase, an RNA-dependent RNA polymerase consisting of viral and host proteins.</title>
        <authorList>
            <person name="Kidmose R.T."/>
            <person name="Vasiliev N.N."/>
            <person name="Chetverin A.B."/>
            <person name="Andersen G.R."/>
            <person name="Knudsen C.R."/>
        </authorList>
    </citation>
    <scope>X-RAY CRYSTALLOGRAPHY (2.50 ANGSTROMS) OF VIRAL CATALYTIC CORE</scope>
    <scope>FUNCTION</scope>
    <scope>SUBUNIT</scope>
</reference>
<reference key="13">
    <citation type="journal article" date="2010" name="Proc. Natl. Acad. Sci. U.S.A.">
        <title>Assembly of Q{beta} viral RNA polymerase with host translational elongation factors EF-Tu and -Ts.</title>
        <authorList>
            <person name="Takeshita D."/>
            <person name="Tomita K."/>
        </authorList>
    </citation>
    <scope>X-RAY CRYSTALLOGRAPHY (2.80 ANGSTROMS) OF VIRAL CATALYTIC CORE IN COMPLEX WITH CALCIUM</scope>
    <scope>FUNCTION</scope>
    <scope>COFACTOR</scope>
    <scope>SUBUNIT</scope>
    <scope>MUTAGENESIS OF LYS-78; ARG-153; ARG-164; LYS-214; ARG-220; ASP-274; SER-279; TYR-357; ASP-359; ASP-360; GLU-395; TYR-411 AND ARG-413</scope>
</reference>
<reference key="14">
    <citation type="journal article" date="2012" name="Nat. Struct. Mol. Biol.">
        <title>Molecular basis for RNA polymerization by Qbeta replicase.</title>
        <authorList>
            <person name="Takeshita D."/>
            <person name="Tomita K."/>
        </authorList>
    </citation>
    <scope>X-RAY CRYSTALLOGRAPHY (2.41 ANGSTROMS) OF VIRAL CATALYTIC CORE IN COMPLEX WITH CALCIUM</scope>
    <scope>FUNCTION</scope>
    <scope>COFACTOR</scope>
    <scope>SUBUNIT</scope>
    <scope>MUTAGENESIS OF HIS-168; ARG-241; PHE-329; TYR-357; TYR-511 AND ASN-549</scope>
    <scope>CATALYTIC ACTIVITY</scope>
</reference>
<reference key="15">
    <citation type="journal article" date="2012" name="Structure">
        <title>Mechanism for template-independent terminal adenylation activity of Qbeta replicase.</title>
        <authorList>
            <person name="Takeshita D."/>
            <person name="Yamashita S."/>
            <person name="Tomita K."/>
        </authorList>
    </citation>
    <scope>X-RAY CRYSTALLOGRAPHY (2.60 ANGSTROMS) OF VIRAL CATALYTIC CORE IN COMPLEX WITH CALCIUM</scope>
    <scope>FUNCTION</scope>
    <scope>COFACTOR</scope>
    <scope>SUBUNIT</scope>
</reference>
<reference key="16">
    <citation type="journal article" date="2014" name="Nucleic Acids Res.">
        <title>Molecular insights into replication initiation by Qbeta replicase using ribosomal protein S1.</title>
        <authorList>
            <person name="Takeshita D."/>
            <person name="Yamashita S."/>
            <person name="Tomita K."/>
        </authorList>
    </citation>
    <scope>X-RAY CRYSTALLOGRAPHY (2.90 ANGSTROMS) OF 2-589 OF THE REPLICASE COMPLEX</scope>
    <scope>FUNCTION</scope>
    <scope>SUBUNIT</scope>
</reference>
<reference evidence="22" key="17">
    <citation type="journal article" date="2015" name="Nucleic Acids Res.">
        <title>Structural basis for RNA-genome recognition during bacteriophage Qbeta replication.</title>
        <authorList>
            <person name="Gytz H."/>
            <person name="Mohr D."/>
            <person name="Seweryn P."/>
            <person name="Yoshimura Y."/>
            <person name="Kutlubaeva Z."/>
            <person name="Dolman F."/>
            <person name="Chelchessa B."/>
            <person name="Chetverin A.B."/>
            <person name="Mulder F.A."/>
            <person name="Brodersen D.E."/>
            <person name="Knudsen C.R."/>
        </authorList>
    </citation>
    <scope>X-RAY CRYSTALLOGRAPHY (3.21 ANGSTROMS) OF THE REPLICASE COMPLEX</scope>
    <scope>FUNCTION</scope>
    <scope>RNA-BINDING</scope>
    <scope>SUBUNIT</scope>
    <scope>MUTAGENESIS OF ARG-132; ARG-133; LYS-134; LYS-137; GLU-345; ASP-348 AND ASP-350</scope>
</reference>
<protein>
    <recommendedName>
        <fullName>RNA-directed RNA polymerase subunit beta</fullName>
        <ecNumber evidence="8">2.7.7.48</ecNumber>
    </recommendedName>
    <alternativeName>
        <fullName>RNA replicase beta chain</fullName>
    </alternativeName>
    <alternativeName>
        <fullName evidence="17">RNA-directed RNA polymerase subunit II</fullName>
    </alternativeName>
</protein>
<evidence type="ECO:0000255" key="1">
    <source>
        <dbReference type="PROSITE-ProRule" id="PRU00539"/>
    </source>
</evidence>
<evidence type="ECO:0000269" key="2">
    <source>
    </source>
</evidence>
<evidence type="ECO:0000269" key="3">
    <source>
    </source>
</evidence>
<evidence type="ECO:0000269" key="4">
    <source>
    </source>
</evidence>
<evidence type="ECO:0000269" key="5">
    <source>
    </source>
</evidence>
<evidence type="ECO:0000269" key="6">
    <source>
    </source>
</evidence>
<evidence type="ECO:0000269" key="7">
    <source>
    </source>
</evidence>
<evidence type="ECO:0000269" key="8">
    <source>
    </source>
</evidence>
<evidence type="ECO:0000269" key="9">
    <source>
    </source>
</evidence>
<evidence type="ECO:0000269" key="10">
    <source>
    </source>
</evidence>
<evidence type="ECO:0000269" key="11">
    <source>
    </source>
</evidence>
<evidence type="ECO:0000269" key="12">
    <source>
    </source>
</evidence>
<evidence type="ECO:0000269" key="13">
    <source>
    </source>
</evidence>
<evidence type="ECO:0000269" key="14">
    <source>
    </source>
</evidence>
<evidence type="ECO:0000269" key="15">
    <source>
    </source>
</evidence>
<evidence type="ECO:0000269" key="16">
    <source ref="2"/>
</evidence>
<evidence type="ECO:0000303" key="17">
    <source>
    </source>
</evidence>
<evidence type="ECO:0000312" key="18">
    <source>
        <dbReference type="EMBL" id="ACY07225.1"/>
    </source>
</evidence>
<evidence type="ECO:0000312" key="19">
    <source>
        <dbReference type="EMBL" id="ACY07229.1"/>
    </source>
</evidence>
<evidence type="ECO:0000312" key="20">
    <source>
        <dbReference type="EMBL" id="ACY07237.1"/>
    </source>
</evidence>
<evidence type="ECO:0000312" key="21">
    <source>
        <dbReference type="EMBL" id="AEQ25547.1"/>
    </source>
</evidence>
<evidence type="ECO:0007744" key="22">
    <source>
        <dbReference type="PDB" id="4R71"/>
    </source>
</evidence>
<evidence type="ECO:0007829" key="23">
    <source>
        <dbReference type="PDB" id="3AGP"/>
    </source>
</evidence>
<evidence type="ECO:0007829" key="24">
    <source>
        <dbReference type="PDB" id="3AGQ"/>
    </source>
</evidence>
<evidence type="ECO:0007829" key="25">
    <source>
        <dbReference type="PDB" id="3AVV"/>
    </source>
</evidence>
<evidence type="ECO:0007829" key="26">
    <source>
        <dbReference type="PDB" id="3AVW"/>
    </source>
</evidence>
<evidence type="ECO:0007829" key="27">
    <source>
        <dbReference type="PDB" id="3AVX"/>
    </source>
</evidence>
<evidence type="ECO:0007829" key="28">
    <source>
        <dbReference type="PDB" id="3MMP"/>
    </source>
</evidence>
<evidence type="ECO:0007829" key="29">
    <source>
        <dbReference type="PDB" id="3VNU"/>
    </source>
</evidence>
<evidence type="ECO:0007829" key="30">
    <source>
        <dbReference type="PDB" id="3VNV"/>
    </source>
</evidence>
<evidence type="ECO:0007829" key="31">
    <source>
        <dbReference type="PDB" id="4Q7J"/>
    </source>
</evidence>
<evidence type="ECO:0007829" key="32">
    <source>
        <dbReference type="PDB" id="4R71"/>
    </source>
</evidence>
<name>RDRP_BPQBE</name>
<dbReference type="EC" id="2.7.7.48" evidence="8"/>
<dbReference type="EMBL" id="X14764">
    <property type="protein sequence ID" value="CAA32872.1"/>
    <property type="molecule type" value="mRNA"/>
</dbReference>
<dbReference type="EMBL" id="AY099114">
    <property type="protein sequence ID" value="AAM33128.1"/>
    <property type="molecule type" value="Genomic_RNA"/>
</dbReference>
<dbReference type="EMBL" id="GQ153928">
    <property type="protein sequence ID" value="ACY07225.1"/>
    <property type="molecule type" value="Genomic_RNA"/>
</dbReference>
<dbReference type="EMBL" id="GQ153929">
    <property type="protein sequence ID" value="ACY07229.1"/>
    <property type="molecule type" value="Genomic_RNA"/>
</dbReference>
<dbReference type="EMBL" id="AB971354">
    <property type="protein sequence ID" value="BAP18765.1"/>
    <property type="molecule type" value="Genomic_RNA"/>
</dbReference>
<dbReference type="EMBL" id="JF719735">
    <property type="protein sequence ID" value="AEQ25543.1"/>
    <property type="molecule type" value="Genomic_RNA"/>
</dbReference>
<dbReference type="EMBL" id="JF719736">
    <property type="protein sequence ID" value="AEQ25547.1"/>
    <property type="molecule type" value="Genomic_RNA"/>
</dbReference>
<dbReference type="EMBL" id="GQ153931">
    <property type="protein sequence ID" value="ACY07237.1"/>
    <property type="molecule type" value="Genomic_RNA"/>
</dbReference>
<dbReference type="EMBL" id="M24876">
    <property type="protein sequence ID" value="AAA50307.1"/>
    <property type="molecule type" value="Genomic_RNA"/>
</dbReference>
<dbReference type="PIR" id="S03340">
    <property type="entry name" value="RRBPBQ"/>
</dbReference>
<dbReference type="PDB" id="3AGP">
    <property type="method" value="X-ray"/>
    <property type="resolution" value="2.80 A"/>
    <property type="chains" value="A=1-589"/>
</dbReference>
<dbReference type="PDB" id="3AGQ">
    <property type="method" value="X-ray"/>
    <property type="resolution" value="3.22 A"/>
    <property type="chains" value="A=1-589"/>
</dbReference>
<dbReference type="PDB" id="3AVT">
    <property type="method" value="X-ray"/>
    <property type="resolution" value="2.61 A"/>
    <property type="chains" value="A=1-589"/>
</dbReference>
<dbReference type="PDB" id="3AVU">
    <property type="method" value="X-ray"/>
    <property type="resolution" value="2.91 A"/>
    <property type="chains" value="A=1-589"/>
</dbReference>
<dbReference type="PDB" id="3AVV">
    <property type="method" value="X-ray"/>
    <property type="resolution" value="3.12 A"/>
    <property type="chains" value="A=1-589"/>
</dbReference>
<dbReference type="PDB" id="3AVW">
    <property type="method" value="X-ray"/>
    <property type="resolution" value="2.60 A"/>
    <property type="chains" value="A=1-589"/>
</dbReference>
<dbReference type="PDB" id="3AVX">
    <property type="method" value="X-ray"/>
    <property type="resolution" value="2.41 A"/>
    <property type="chains" value="A=1-589"/>
</dbReference>
<dbReference type="PDB" id="3AVY">
    <property type="method" value="X-ray"/>
    <property type="resolution" value="2.62 A"/>
    <property type="chains" value="A=1-589"/>
</dbReference>
<dbReference type="PDB" id="3MMP">
    <property type="method" value="X-ray"/>
    <property type="resolution" value="2.50 A"/>
    <property type="chains" value="F/G=1-589"/>
</dbReference>
<dbReference type="PDB" id="3VNU">
    <property type="method" value="X-ray"/>
    <property type="resolution" value="3.20 A"/>
    <property type="chains" value="A=1-589"/>
</dbReference>
<dbReference type="PDB" id="3VNV">
    <property type="method" value="X-ray"/>
    <property type="resolution" value="2.60 A"/>
    <property type="chains" value="A=1-589"/>
</dbReference>
<dbReference type="PDB" id="4FWT">
    <property type="method" value="X-ray"/>
    <property type="resolution" value="3.20 A"/>
    <property type="chains" value="A=1-589"/>
</dbReference>
<dbReference type="PDB" id="4Q7J">
    <property type="method" value="X-ray"/>
    <property type="resolution" value="2.90 A"/>
    <property type="chains" value="C/G=2-589"/>
</dbReference>
<dbReference type="PDB" id="4R71">
    <property type="method" value="X-ray"/>
    <property type="resolution" value="3.21 A"/>
    <property type="chains" value="B/D=1-589"/>
</dbReference>
<dbReference type="PDBsum" id="3AGP"/>
<dbReference type="PDBsum" id="3AGQ"/>
<dbReference type="PDBsum" id="3AVT"/>
<dbReference type="PDBsum" id="3AVU"/>
<dbReference type="PDBsum" id="3AVV"/>
<dbReference type="PDBsum" id="3AVW"/>
<dbReference type="PDBsum" id="3AVX"/>
<dbReference type="PDBsum" id="3AVY"/>
<dbReference type="PDBsum" id="3MMP"/>
<dbReference type="PDBsum" id="3VNU"/>
<dbReference type="PDBsum" id="3VNV"/>
<dbReference type="PDBsum" id="4FWT"/>
<dbReference type="PDBsum" id="4Q7J"/>
<dbReference type="PDBsum" id="4R71"/>
<dbReference type="SMR" id="P14647"/>
<dbReference type="DIP" id="DIP-59375N"/>
<dbReference type="IntAct" id="P14647">
    <property type="interactions" value="2"/>
</dbReference>
<dbReference type="BRENDA" id="2.7.7.48">
    <property type="organism ID" value="727"/>
</dbReference>
<dbReference type="EvolutionaryTrace" id="P14647"/>
<dbReference type="Proteomes" id="UP000185268">
    <property type="component" value="Segment"/>
</dbReference>
<dbReference type="Proteomes" id="UP000305125">
    <property type="component" value="Segment"/>
</dbReference>
<dbReference type="Proteomes" id="UP000306921">
    <property type="component" value="Segment"/>
</dbReference>
<dbReference type="GO" id="GO:0046872">
    <property type="term" value="F:metal ion binding"/>
    <property type="evidence" value="ECO:0007669"/>
    <property type="project" value="UniProtKB-KW"/>
</dbReference>
<dbReference type="GO" id="GO:0000166">
    <property type="term" value="F:nucleotide binding"/>
    <property type="evidence" value="ECO:0007669"/>
    <property type="project" value="UniProtKB-KW"/>
</dbReference>
<dbReference type="GO" id="GO:0003723">
    <property type="term" value="F:RNA binding"/>
    <property type="evidence" value="ECO:0007669"/>
    <property type="project" value="UniProtKB-KW"/>
</dbReference>
<dbReference type="GO" id="GO:0003968">
    <property type="term" value="F:RNA-directed RNA polymerase activity"/>
    <property type="evidence" value="ECO:0007669"/>
    <property type="project" value="UniProtKB-KW"/>
</dbReference>
<dbReference type="GO" id="GO:0039694">
    <property type="term" value="P:viral RNA genome replication"/>
    <property type="evidence" value="ECO:0007669"/>
    <property type="project" value="InterPro"/>
</dbReference>
<dbReference type="CDD" id="cd23176">
    <property type="entry name" value="ps-ssRNAv_Leviviridae_RdRp"/>
    <property type="match status" value="1"/>
</dbReference>
<dbReference type="InterPro" id="IPR043502">
    <property type="entry name" value="DNA/RNA_pol_sf"/>
</dbReference>
<dbReference type="InterPro" id="IPR007096">
    <property type="entry name" value="RNA-dir_Rpol_cat_phage"/>
</dbReference>
<dbReference type="InterPro" id="IPR005093">
    <property type="entry name" value="RNArep_beta"/>
</dbReference>
<dbReference type="Pfam" id="PF03431">
    <property type="entry name" value="RNA_replicase_B"/>
    <property type="match status" value="1"/>
</dbReference>
<dbReference type="SUPFAM" id="SSF56672">
    <property type="entry name" value="DNA/RNA polymerases"/>
    <property type="match status" value="1"/>
</dbReference>
<dbReference type="PROSITE" id="PS50522">
    <property type="entry name" value="RDRP_PHAGE"/>
    <property type="match status" value="1"/>
</dbReference>